<sequence length="391" mass="41567">MGYPEVERREPLPAAAPRERGSQGCGCRGAPARAGEGNSCRLFLGFFGLSLALHLLTLCCYLELRSELRRERGAESRFSGPGTPGTSGTLSSPGGLDPNGPITRHFGQRSPQQQPLEPGETTLPPDSQDGHQMALVNFFIPKEKSYSEEESRRVRRNKRSKSSEGADGPVKNKKKGKKAGPPGPNGPPGPPGPPGPQGPPGIPGIPGIPGTTVMGPPGPPGPPGPQGPPGLQGPSGAADKAGTRENQPAVVHLQGQGSAIQVKNDLSGGVLNDWSRITMNPKVFKLHPRSGELEVLVDGTYFIYSQVEVYYINFTDFASYEVVVDEKPFLQCTRSIETGKTNYNTCYTAGVCLLKARQKIAVKMVHADISINMSKHTTFFGAIRLGEAPAS</sequence>
<dbReference type="EMBL" id="AJ300468">
    <property type="protein sequence ID" value="CAC29151.1"/>
    <property type="molecule type" value="Genomic_DNA"/>
</dbReference>
<dbReference type="EMBL" id="AJ300469">
    <property type="protein sequence ID" value="CAC29151.1"/>
    <property type="status" value="JOINED"/>
    <property type="molecule type" value="Genomic_DNA"/>
</dbReference>
<dbReference type="EMBL" id="AJ278907">
    <property type="protein sequence ID" value="CAC29151.1"/>
    <property type="status" value="JOINED"/>
    <property type="molecule type" value="Genomic_DNA"/>
</dbReference>
<dbReference type="EMBL" id="AJ300468">
    <property type="protein sequence ID" value="CAC29152.1"/>
    <property type="molecule type" value="Genomic_DNA"/>
</dbReference>
<dbReference type="EMBL" id="AJ300469">
    <property type="protein sequence ID" value="CAC29152.1"/>
    <property type="status" value="JOINED"/>
    <property type="molecule type" value="Genomic_DNA"/>
</dbReference>
<dbReference type="EMBL" id="AJ278907">
    <property type="protein sequence ID" value="CAC29152.1"/>
    <property type="status" value="JOINED"/>
    <property type="molecule type" value="Genomic_DNA"/>
</dbReference>
<dbReference type="RefSeq" id="NP_001075212.1">
    <molecule id="Q9BEG5-1"/>
    <property type="nucleotide sequence ID" value="NM_001081743.2"/>
</dbReference>
<dbReference type="RefSeq" id="XP_005228089.1">
    <molecule id="Q9BEG5-2"/>
    <property type="nucleotide sequence ID" value="XM_005228032.5"/>
</dbReference>
<dbReference type="SMR" id="Q9BEG5"/>
<dbReference type="FunCoup" id="Q9BEG5">
    <property type="interactions" value="164"/>
</dbReference>
<dbReference type="STRING" id="9913.ENSBTAP00000016649"/>
<dbReference type="GlyCosmos" id="Q9BEG5">
    <property type="glycosylation" value="2 sites, No reported glycans"/>
</dbReference>
<dbReference type="GlyGen" id="Q9BEG5">
    <property type="glycosylation" value="2 sites"/>
</dbReference>
<dbReference type="PaxDb" id="9913-ENSBTAP00000016649"/>
<dbReference type="Ensembl" id="ENSBTAT00000016649.7">
    <molecule id="Q9BEG5-1"/>
    <property type="protein sequence ID" value="ENSBTAP00000016649.7"/>
    <property type="gene ID" value="ENSBTAG00000012543.7"/>
</dbReference>
<dbReference type="GeneID" id="616179"/>
<dbReference type="KEGG" id="bta:616179"/>
<dbReference type="CTD" id="1896"/>
<dbReference type="eggNOG" id="ENOG502QUAV">
    <property type="taxonomic scope" value="Eukaryota"/>
</dbReference>
<dbReference type="GeneTree" id="ENSGT00730000111220"/>
<dbReference type="HOGENOM" id="CLU_062448_0_0_1"/>
<dbReference type="InParanoid" id="Q9BEG5"/>
<dbReference type="OrthoDB" id="6159739at2759"/>
<dbReference type="TreeFam" id="TF332099"/>
<dbReference type="Proteomes" id="UP000009136">
    <property type="component" value="Chromosome X"/>
</dbReference>
<dbReference type="GO" id="GO:0045177">
    <property type="term" value="C:apical part of cell"/>
    <property type="evidence" value="ECO:0007669"/>
    <property type="project" value="Ensembl"/>
</dbReference>
<dbReference type="GO" id="GO:0005581">
    <property type="term" value="C:collagen trimer"/>
    <property type="evidence" value="ECO:0007669"/>
    <property type="project" value="UniProtKB-KW"/>
</dbReference>
<dbReference type="GO" id="GO:0005789">
    <property type="term" value="C:endoplasmic reticulum membrane"/>
    <property type="evidence" value="ECO:0007669"/>
    <property type="project" value="Ensembl"/>
</dbReference>
<dbReference type="GO" id="GO:0005615">
    <property type="term" value="C:extracellular space"/>
    <property type="evidence" value="ECO:0000318"/>
    <property type="project" value="GO_Central"/>
</dbReference>
<dbReference type="GO" id="GO:0005811">
    <property type="term" value="C:lipid droplet"/>
    <property type="evidence" value="ECO:0007669"/>
    <property type="project" value="Ensembl"/>
</dbReference>
<dbReference type="GO" id="GO:0005886">
    <property type="term" value="C:plasma membrane"/>
    <property type="evidence" value="ECO:0007669"/>
    <property type="project" value="UniProtKB-SubCell"/>
</dbReference>
<dbReference type="GO" id="GO:0005125">
    <property type="term" value="F:cytokine activity"/>
    <property type="evidence" value="ECO:0007669"/>
    <property type="project" value="UniProtKB-KW"/>
</dbReference>
<dbReference type="GO" id="GO:0038177">
    <property type="term" value="F:death receptor agonist activity"/>
    <property type="evidence" value="ECO:0000250"/>
    <property type="project" value="UniProtKB"/>
</dbReference>
<dbReference type="GO" id="GO:0005123">
    <property type="term" value="F:death receptor binding"/>
    <property type="evidence" value="ECO:0000250"/>
    <property type="project" value="UniProtKB"/>
</dbReference>
<dbReference type="GO" id="GO:0048018">
    <property type="term" value="F:receptor ligand activity"/>
    <property type="evidence" value="ECO:0000318"/>
    <property type="project" value="GO_Central"/>
</dbReference>
<dbReference type="GO" id="GO:0005164">
    <property type="term" value="F:tumor necrosis factor receptor binding"/>
    <property type="evidence" value="ECO:0007669"/>
    <property type="project" value="InterPro"/>
</dbReference>
<dbReference type="GO" id="GO:0048513">
    <property type="term" value="P:animal organ development"/>
    <property type="evidence" value="ECO:0000318"/>
    <property type="project" value="GO_Central"/>
</dbReference>
<dbReference type="GO" id="GO:0060070">
    <property type="term" value="P:canonical Wnt signaling pathway"/>
    <property type="evidence" value="ECO:0007669"/>
    <property type="project" value="Ensembl"/>
</dbReference>
<dbReference type="GO" id="GO:0030154">
    <property type="term" value="P:cell differentiation"/>
    <property type="evidence" value="ECO:0007669"/>
    <property type="project" value="UniProtKB-KW"/>
</dbReference>
<dbReference type="GO" id="GO:0007160">
    <property type="term" value="P:cell-matrix adhesion"/>
    <property type="evidence" value="ECO:0007669"/>
    <property type="project" value="Ensembl"/>
</dbReference>
<dbReference type="GO" id="GO:0019221">
    <property type="term" value="P:cytokine-mediated signaling pathway"/>
    <property type="evidence" value="ECO:0000250"/>
    <property type="project" value="UniProtKB"/>
</dbReference>
<dbReference type="GO" id="GO:0010467">
    <property type="term" value="P:gene expression"/>
    <property type="evidence" value="ECO:0007669"/>
    <property type="project" value="Ensembl"/>
</dbReference>
<dbReference type="GO" id="GO:0060789">
    <property type="term" value="P:hair follicle placode formation"/>
    <property type="evidence" value="ECO:0007669"/>
    <property type="project" value="Ensembl"/>
</dbReference>
<dbReference type="GO" id="GO:0006955">
    <property type="term" value="P:immune response"/>
    <property type="evidence" value="ECO:0007669"/>
    <property type="project" value="InterPro"/>
</dbReference>
<dbReference type="GO" id="GO:0042475">
    <property type="term" value="P:odontogenesis of dentin-containing tooth"/>
    <property type="evidence" value="ECO:0000250"/>
    <property type="project" value="UniProtKB"/>
</dbReference>
<dbReference type="GO" id="GO:0043473">
    <property type="term" value="P:pigmentation"/>
    <property type="evidence" value="ECO:0007669"/>
    <property type="project" value="Ensembl"/>
</dbReference>
<dbReference type="GO" id="GO:0043123">
    <property type="term" value="P:positive regulation of canonical NF-kappaB signal transduction"/>
    <property type="evidence" value="ECO:0007669"/>
    <property type="project" value="Ensembl"/>
</dbReference>
<dbReference type="GO" id="GO:0090263">
    <property type="term" value="P:positive regulation of canonical Wnt signaling pathway"/>
    <property type="evidence" value="ECO:0007669"/>
    <property type="project" value="Ensembl"/>
</dbReference>
<dbReference type="GO" id="GO:0010628">
    <property type="term" value="P:positive regulation of gene expression"/>
    <property type="evidence" value="ECO:0007669"/>
    <property type="project" value="Ensembl"/>
</dbReference>
<dbReference type="GO" id="GO:1901224">
    <property type="term" value="P:positive regulation of non-canonical NF-kappaB signal transduction"/>
    <property type="evidence" value="ECO:0007669"/>
    <property type="project" value="Ensembl"/>
</dbReference>
<dbReference type="GO" id="GO:1901222">
    <property type="term" value="P:regulation of non-canonical NF-kappaB signal transduction"/>
    <property type="evidence" value="ECO:0000250"/>
    <property type="project" value="UniProtKB"/>
</dbReference>
<dbReference type="GO" id="GO:0060662">
    <property type="term" value="P:salivary gland cavitation"/>
    <property type="evidence" value="ECO:0007669"/>
    <property type="project" value="Ensembl"/>
</dbReference>
<dbReference type="GO" id="GO:0061153">
    <property type="term" value="P:trachea gland development"/>
    <property type="evidence" value="ECO:0007669"/>
    <property type="project" value="Ensembl"/>
</dbReference>
<dbReference type="CDD" id="cd00184">
    <property type="entry name" value="TNF"/>
    <property type="match status" value="1"/>
</dbReference>
<dbReference type="FunFam" id="2.60.120.40:FF:000004">
    <property type="entry name" value="Ectodysplasin-A isoform A"/>
    <property type="match status" value="1"/>
</dbReference>
<dbReference type="Gene3D" id="2.60.120.40">
    <property type="match status" value="1"/>
</dbReference>
<dbReference type="InterPro" id="IPR006052">
    <property type="entry name" value="TNF_dom"/>
</dbReference>
<dbReference type="InterPro" id="IPR051748">
    <property type="entry name" value="TNF_Ligand_Superfamily"/>
</dbReference>
<dbReference type="InterPro" id="IPR008983">
    <property type="entry name" value="Tumour_necrosis_fac-like_dom"/>
</dbReference>
<dbReference type="PANTHER" id="PTHR15151:SF13">
    <property type="entry name" value="ECTODYSPLASIN-A"/>
    <property type="match status" value="1"/>
</dbReference>
<dbReference type="PANTHER" id="PTHR15151">
    <property type="entry name" value="PROTEIN EIGER"/>
    <property type="match status" value="1"/>
</dbReference>
<dbReference type="Pfam" id="PF00229">
    <property type="entry name" value="TNF"/>
    <property type="match status" value="1"/>
</dbReference>
<dbReference type="SUPFAM" id="SSF49842">
    <property type="entry name" value="TNF-like"/>
    <property type="match status" value="1"/>
</dbReference>
<dbReference type="PROSITE" id="PS50049">
    <property type="entry name" value="THD_2"/>
    <property type="match status" value="1"/>
</dbReference>
<reference key="1">
    <citation type="journal article" date="2000" name="Anim. Genet.">
        <title>Identification of a highly polymorphic microsatellite within the bovine ectodysplasin A (ED1) gene on BTA Xq22-24.</title>
        <authorList>
            <person name="Droegemueller C."/>
            <person name="Distl O."/>
            <person name="Leeb T."/>
        </authorList>
    </citation>
    <scope>NUCLEOTIDE SEQUENCE [GENOMIC DNA] (ISOFORMS A1 AND A2)</scope>
    <source>
        <strain>Holstein</strain>
    </source>
</reference>
<accession>Q9BEG5</accession>
<accession>Q9BEG6</accession>
<proteinExistence type="inferred from homology"/>
<keyword id="KW-0025">Alternative splicing</keyword>
<keyword id="KW-1003">Cell membrane</keyword>
<keyword id="KW-0165">Cleavage on pair of basic residues</keyword>
<keyword id="KW-0176">Collagen</keyword>
<keyword id="KW-0202">Cytokine</keyword>
<keyword id="KW-0217">Developmental protein</keyword>
<keyword id="KW-0221">Differentiation</keyword>
<keyword id="KW-1015">Disulfide bond</keyword>
<keyword id="KW-0325">Glycoprotein</keyword>
<keyword id="KW-0472">Membrane</keyword>
<keyword id="KW-1185">Reference proteome</keyword>
<keyword id="KW-0964">Secreted</keyword>
<keyword id="KW-0735">Signal-anchor</keyword>
<keyword id="KW-0812">Transmembrane</keyword>
<keyword id="KW-1133">Transmembrane helix</keyword>
<evidence type="ECO:0000250" key="1">
    <source>
        <dbReference type="UniProtKB" id="O54693"/>
    </source>
</evidence>
<evidence type="ECO:0000250" key="2">
    <source>
        <dbReference type="UniProtKB" id="Q92838"/>
    </source>
</evidence>
<evidence type="ECO:0000255" key="3"/>
<evidence type="ECO:0000255" key="4">
    <source>
        <dbReference type="PROSITE-ProRule" id="PRU01387"/>
    </source>
</evidence>
<evidence type="ECO:0000256" key="5">
    <source>
        <dbReference type="SAM" id="MobiDB-lite"/>
    </source>
</evidence>
<evidence type="ECO:0000305" key="6"/>
<organism>
    <name type="scientific">Bos taurus</name>
    <name type="common">Bovine</name>
    <dbReference type="NCBI Taxonomy" id="9913"/>
    <lineage>
        <taxon>Eukaryota</taxon>
        <taxon>Metazoa</taxon>
        <taxon>Chordata</taxon>
        <taxon>Craniata</taxon>
        <taxon>Vertebrata</taxon>
        <taxon>Euteleostomi</taxon>
        <taxon>Mammalia</taxon>
        <taxon>Eutheria</taxon>
        <taxon>Laurasiatheria</taxon>
        <taxon>Artiodactyla</taxon>
        <taxon>Ruminantia</taxon>
        <taxon>Pecora</taxon>
        <taxon>Bovidae</taxon>
        <taxon>Bovinae</taxon>
        <taxon>Bos</taxon>
    </lineage>
</organism>
<feature type="chain" id="PRO_0000034536" description="Ectodysplasin-A, membrane form">
    <location>
        <begin position="1"/>
        <end position="391"/>
    </location>
</feature>
<feature type="chain" id="PRO_0000034537" description="Ectodysplasin-A, secreted form" evidence="2">
    <location>
        <begin position="160"/>
        <end position="391"/>
    </location>
</feature>
<feature type="topological domain" description="Cytoplasmic" evidence="3">
    <location>
        <begin position="1"/>
        <end position="41"/>
    </location>
</feature>
<feature type="transmembrane region" description="Helical; Signal-anchor for type II membrane protein" evidence="3">
    <location>
        <begin position="42"/>
        <end position="62"/>
    </location>
</feature>
<feature type="topological domain" description="Extracellular" evidence="3">
    <location>
        <begin position="63"/>
        <end position="391"/>
    </location>
</feature>
<feature type="domain" description="Collagen-like">
    <location>
        <begin position="180"/>
        <end position="229"/>
    </location>
</feature>
<feature type="domain" description="THD" evidence="4">
    <location>
        <begin position="249"/>
        <end position="385"/>
    </location>
</feature>
<feature type="region of interest" description="Disordered" evidence="5">
    <location>
        <begin position="1"/>
        <end position="28"/>
    </location>
</feature>
<feature type="region of interest" description="Disordered" evidence="5">
    <location>
        <begin position="73"/>
        <end position="130"/>
    </location>
</feature>
<feature type="region of interest" description="Disordered" evidence="5">
    <location>
        <begin position="145"/>
        <end position="245"/>
    </location>
</feature>
<feature type="compositionally biased region" description="Basic and acidic residues" evidence="5">
    <location>
        <begin position="1"/>
        <end position="21"/>
    </location>
</feature>
<feature type="compositionally biased region" description="Low complexity" evidence="5">
    <location>
        <begin position="76"/>
        <end position="96"/>
    </location>
</feature>
<feature type="compositionally biased region" description="Pro residues" evidence="5">
    <location>
        <begin position="181"/>
        <end position="203"/>
    </location>
</feature>
<feature type="compositionally biased region" description="Pro residues" evidence="5">
    <location>
        <begin position="216"/>
        <end position="228"/>
    </location>
</feature>
<feature type="site" description="Cleavage; by furin" evidence="2">
    <location>
        <begin position="159"/>
        <end position="160"/>
    </location>
</feature>
<feature type="glycosylation site" description="N-linked (GlcNAc...) asparagine" evidence="3">
    <location>
        <position position="313"/>
    </location>
</feature>
<feature type="glycosylation site" description="N-linked (GlcNAc...) asparagine" evidence="3">
    <location>
        <position position="372"/>
    </location>
</feature>
<feature type="disulfide bond" evidence="4">
    <location>
        <begin position="332"/>
        <end position="346"/>
    </location>
</feature>
<feature type="splice variant" id="VSP_006453" description="In isoform A2." evidence="6">
    <location>
        <begin position="307"/>
        <end position="308"/>
    </location>
</feature>
<gene>
    <name type="primary">EDA</name>
    <name type="synonym">ED1</name>
</gene>
<name>EDA_BOVIN</name>
<protein>
    <recommendedName>
        <fullName>Ectodysplasin-A</fullName>
    </recommendedName>
    <alternativeName>
        <fullName>Ectodermal dysplasia protein</fullName>
    </alternativeName>
    <alternativeName>
        <fullName>Ectodysplasin-1</fullName>
    </alternativeName>
    <component>
        <recommendedName>
            <fullName>Ectodysplasin-A, membrane form</fullName>
        </recommendedName>
    </component>
    <component>
        <recommendedName>
            <fullName>Ectodysplasin-A, secreted form</fullName>
        </recommendedName>
    </component>
</protein>
<comment type="function">
    <text evidence="1 2">Cytokine which is involved in epithelial-mesenchymal signaling during morphogenesis of ectodermal organs. Functions as a ligand activating the DEATH-domain containing receptors EDAR and EDA2R. Isoform A1 binds only to the receptor EDAR, while isoform A2 binds exclusively to the receptor EDA2R. May also play a role in cell adhesion.</text>
</comment>
<comment type="function">
    <text evidence="2">Isoform A1 binds only to the receptor EDAR, while isoform A2 binds exclusively to the receptor EDA2R.</text>
</comment>
<comment type="function">
    <text evidence="2">Isoform A2 binds exclusively to the receptor EDA2R.</text>
</comment>
<comment type="subunit">
    <text evidence="2">Homotrimer. The homotrimers may then dimerize and form higher-order oligomers.</text>
</comment>
<comment type="subcellular location">
    <subcellularLocation>
        <location evidence="1">Cell membrane</location>
        <topology evidence="1">Single-pass type II membrane protein</topology>
    </subcellularLocation>
</comment>
<comment type="subcellular location">
    <molecule>Ectodysplasin-A, secreted form</molecule>
    <subcellularLocation>
        <location evidence="2">Secreted</location>
    </subcellularLocation>
</comment>
<comment type="alternative products">
    <event type="alternative splicing"/>
    <isoform>
        <id>Q9BEG5-1</id>
        <name>A1</name>
        <sequence type="displayed"/>
    </isoform>
    <isoform>
        <id>Q9BEG5-2</id>
        <name>A2</name>
        <sequence type="described" ref="VSP_006453"/>
    </isoform>
    <text>Additional isoforms seem to exist.</text>
</comment>
<comment type="PTM">
    <text evidence="1">N-glycosylated.</text>
</comment>
<comment type="PTM">
    <text evidence="2">Processing by furin produces a secreted form.</text>
</comment>
<comment type="similarity">
    <text evidence="6">Belongs to the tumor necrosis factor family.</text>
</comment>